<organism>
    <name type="scientific">Pseudomonas syringae pv. tomato (strain ATCC BAA-871 / DC3000)</name>
    <dbReference type="NCBI Taxonomy" id="223283"/>
    <lineage>
        <taxon>Bacteria</taxon>
        <taxon>Pseudomonadati</taxon>
        <taxon>Pseudomonadota</taxon>
        <taxon>Gammaproteobacteria</taxon>
        <taxon>Pseudomonadales</taxon>
        <taxon>Pseudomonadaceae</taxon>
        <taxon>Pseudomonas</taxon>
    </lineage>
</organism>
<protein>
    <recommendedName>
        <fullName evidence="1">Small ribosomal subunit protein uS10</fullName>
    </recommendedName>
    <alternativeName>
        <fullName evidence="2">30S ribosomal protein S10</fullName>
    </alternativeName>
</protein>
<feature type="chain" id="PRO_0000146580" description="Small ribosomal subunit protein uS10">
    <location>
        <begin position="1"/>
        <end position="103"/>
    </location>
</feature>
<sequence>MQNQQIRIRLKAFDHRLIDQSTQEIVETAKRTGAQVRGPIPLPTRKERFTVLVSPHVNKDARDQYEIRTHKRVLDIVQPTEKTVDALMKLDLAAGVEVQISLG</sequence>
<name>RS10_PSESM</name>
<dbReference type="EMBL" id="AE016853">
    <property type="protein sequence ID" value="AAO54167.1"/>
    <property type="molecule type" value="Genomic_DNA"/>
</dbReference>
<dbReference type="RefSeq" id="NP_790472.1">
    <property type="nucleotide sequence ID" value="NC_004578.1"/>
</dbReference>
<dbReference type="RefSeq" id="WP_002555491.1">
    <property type="nucleotide sequence ID" value="NC_004578.1"/>
</dbReference>
<dbReference type="SMR" id="Q889X2"/>
<dbReference type="STRING" id="223283.PSPTO_0625"/>
<dbReference type="GeneID" id="96221031"/>
<dbReference type="KEGG" id="pst:PSPTO_0625"/>
<dbReference type="PATRIC" id="fig|223283.9.peg.631"/>
<dbReference type="eggNOG" id="COG0051">
    <property type="taxonomic scope" value="Bacteria"/>
</dbReference>
<dbReference type="HOGENOM" id="CLU_122625_1_3_6"/>
<dbReference type="OrthoDB" id="9804464at2"/>
<dbReference type="PhylomeDB" id="Q889X2"/>
<dbReference type="Proteomes" id="UP000002515">
    <property type="component" value="Chromosome"/>
</dbReference>
<dbReference type="GO" id="GO:1990904">
    <property type="term" value="C:ribonucleoprotein complex"/>
    <property type="evidence" value="ECO:0007669"/>
    <property type="project" value="UniProtKB-KW"/>
</dbReference>
<dbReference type="GO" id="GO:0005840">
    <property type="term" value="C:ribosome"/>
    <property type="evidence" value="ECO:0007669"/>
    <property type="project" value="UniProtKB-KW"/>
</dbReference>
<dbReference type="GO" id="GO:0003735">
    <property type="term" value="F:structural constituent of ribosome"/>
    <property type="evidence" value="ECO:0007669"/>
    <property type="project" value="InterPro"/>
</dbReference>
<dbReference type="GO" id="GO:0000049">
    <property type="term" value="F:tRNA binding"/>
    <property type="evidence" value="ECO:0007669"/>
    <property type="project" value="UniProtKB-UniRule"/>
</dbReference>
<dbReference type="GO" id="GO:0006412">
    <property type="term" value="P:translation"/>
    <property type="evidence" value="ECO:0007669"/>
    <property type="project" value="UniProtKB-UniRule"/>
</dbReference>
<dbReference type="FunFam" id="3.30.70.600:FF:000001">
    <property type="entry name" value="30S ribosomal protein S10"/>
    <property type="match status" value="1"/>
</dbReference>
<dbReference type="Gene3D" id="3.30.70.600">
    <property type="entry name" value="Ribosomal protein S10 domain"/>
    <property type="match status" value="1"/>
</dbReference>
<dbReference type="HAMAP" id="MF_00508">
    <property type="entry name" value="Ribosomal_uS10"/>
    <property type="match status" value="1"/>
</dbReference>
<dbReference type="InterPro" id="IPR001848">
    <property type="entry name" value="Ribosomal_uS10"/>
</dbReference>
<dbReference type="InterPro" id="IPR018268">
    <property type="entry name" value="Ribosomal_uS10_CS"/>
</dbReference>
<dbReference type="InterPro" id="IPR027486">
    <property type="entry name" value="Ribosomal_uS10_dom"/>
</dbReference>
<dbReference type="InterPro" id="IPR036838">
    <property type="entry name" value="Ribosomal_uS10_dom_sf"/>
</dbReference>
<dbReference type="NCBIfam" id="NF001861">
    <property type="entry name" value="PRK00596.1"/>
    <property type="match status" value="1"/>
</dbReference>
<dbReference type="NCBIfam" id="TIGR01049">
    <property type="entry name" value="rpsJ_bact"/>
    <property type="match status" value="1"/>
</dbReference>
<dbReference type="PANTHER" id="PTHR11700">
    <property type="entry name" value="30S RIBOSOMAL PROTEIN S10 FAMILY MEMBER"/>
    <property type="match status" value="1"/>
</dbReference>
<dbReference type="Pfam" id="PF00338">
    <property type="entry name" value="Ribosomal_S10"/>
    <property type="match status" value="1"/>
</dbReference>
<dbReference type="PRINTS" id="PR00971">
    <property type="entry name" value="RIBOSOMALS10"/>
</dbReference>
<dbReference type="SMART" id="SM01403">
    <property type="entry name" value="Ribosomal_S10"/>
    <property type="match status" value="1"/>
</dbReference>
<dbReference type="SUPFAM" id="SSF54999">
    <property type="entry name" value="Ribosomal protein S10"/>
    <property type="match status" value="1"/>
</dbReference>
<dbReference type="PROSITE" id="PS00361">
    <property type="entry name" value="RIBOSOMAL_S10"/>
    <property type="match status" value="1"/>
</dbReference>
<keyword id="KW-1185">Reference proteome</keyword>
<keyword id="KW-0687">Ribonucleoprotein</keyword>
<keyword id="KW-0689">Ribosomal protein</keyword>
<evidence type="ECO:0000255" key="1">
    <source>
        <dbReference type="HAMAP-Rule" id="MF_00508"/>
    </source>
</evidence>
<evidence type="ECO:0000305" key="2"/>
<reference key="1">
    <citation type="journal article" date="2003" name="Proc. Natl. Acad. Sci. U.S.A.">
        <title>The complete genome sequence of the Arabidopsis and tomato pathogen Pseudomonas syringae pv. tomato DC3000.</title>
        <authorList>
            <person name="Buell C.R."/>
            <person name="Joardar V."/>
            <person name="Lindeberg M."/>
            <person name="Selengut J."/>
            <person name="Paulsen I.T."/>
            <person name="Gwinn M.L."/>
            <person name="Dodson R.J."/>
            <person name="DeBoy R.T."/>
            <person name="Durkin A.S."/>
            <person name="Kolonay J.F."/>
            <person name="Madupu R."/>
            <person name="Daugherty S.C."/>
            <person name="Brinkac L.M."/>
            <person name="Beanan M.J."/>
            <person name="Haft D.H."/>
            <person name="Nelson W.C."/>
            <person name="Davidsen T.M."/>
            <person name="Zafar N."/>
            <person name="Zhou L."/>
            <person name="Liu J."/>
            <person name="Yuan Q."/>
            <person name="Khouri H.M."/>
            <person name="Fedorova N.B."/>
            <person name="Tran B."/>
            <person name="Russell D."/>
            <person name="Berry K.J."/>
            <person name="Utterback T.R."/>
            <person name="Van Aken S.E."/>
            <person name="Feldblyum T.V."/>
            <person name="D'Ascenzo M."/>
            <person name="Deng W.-L."/>
            <person name="Ramos A.R."/>
            <person name="Alfano J.R."/>
            <person name="Cartinhour S."/>
            <person name="Chatterjee A.K."/>
            <person name="Delaney T.P."/>
            <person name="Lazarowitz S.G."/>
            <person name="Martin G.B."/>
            <person name="Schneider D.J."/>
            <person name="Tang X."/>
            <person name="Bender C.L."/>
            <person name="White O."/>
            <person name="Fraser C.M."/>
            <person name="Collmer A."/>
        </authorList>
    </citation>
    <scope>NUCLEOTIDE SEQUENCE [LARGE SCALE GENOMIC DNA]</scope>
    <source>
        <strain>ATCC BAA-871 / DC3000</strain>
    </source>
</reference>
<gene>
    <name evidence="1" type="primary">rpsJ</name>
    <name type="ordered locus">PSPTO_0625</name>
</gene>
<accession>Q889X2</accession>
<comment type="function">
    <text evidence="1">Involved in the binding of tRNA to the ribosomes.</text>
</comment>
<comment type="subunit">
    <text evidence="1">Part of the 30S ribosomal subunit.</text>
</comment>
<comment type="similarity">
    <text evidence="1">Belongs to the universal ribosomal protein uS10 family.</text>
</comment>
<proteinExistence type="inferred from homology"/>